<feature type="transit peptide" description="Chloroplast" evidence="2">
    <location>
        <begin position="1"/>
        <end position="51"/>
    </location>
</feature>
<feature type="chain" id="PRO_0000433268" description="YlmG homolog protein 2, chloroplastic" evidence="2">
    <location>
        <begin position="52"/>
        <end position="251"/>
    </location>
</feature>
<feature type="transmembrane region" description="Helical" evidence="2">
    <location>
        <begin position="119"/>
        <end position="139"/>
    </location>
</feature>
<feature type="transmembrane region" description="Helical" evidence="2">
    <location>
        <begin position="183"/>
        <end position="203"/>
    </location>
</feature>
<feature type="region of interest" description="Disordered" evidence="3">
    <location>
        <begin position="232"/>
        <end position="251"/>
    </location>
</feature>
<feature type="compositionally biased region" description="Basic residues" evidence="3">
    <location>
        <begin position="232"/>
        <end position="243"/>
    </location>
</feature>
<keyword id="KW-0025">Alternative splicing</keyword>
<keyword id="KW-0150">Chloroplast</keyword>
<keyword id="KW-0472">Membrane</keyword>
<keyword id="KW-0934">Plastid</keyword>
<keyword id="KW-1185">Reference proteome</keyword>
<keyword id="KW-0793">Thylakoid</keyword>
<keyword id="KW-0809">Transit peptide</keyword>
<keyword id="KW-0812">Transmembrane</keyword>
<keyword id="KW-1133">Transmembrane helix</keyword>
<proteinExistence type="evidence at transcript level"/>
<accession>Q9C595</accession>
<dbReference type="EMBL" id="AC140977">
    <property type="protein sequence ID" value="AAO73904.1"/>
    <property type="molecule type" value="Genomic_DNA"/>
</dbReference>
<dbReference type="EMBL" id="AL589883">
    <property type="protein sequence ID" value="CAC34485.1"/>
    <property type="molecule type" value="Genomic_DNA"/>
</dbReference>
<dbReference type="EMBL" id="CP002688">
    <property type="protein sequence ID" value="AED92954.1"/>
    <property type="molecule type" value="Genomic_DNA"/>
</dbReference>
<dbReference type="EMBL" id="AK118444">
    <property type="protein sequence ID" value="BAC43053.1"/>
    <property type="molecule type" value="mRNA"/>
</dbReference>
<dbReference type="EMBL" id="BT005265">
    <property type="protein sequence ID" value="AAO63329.1"/>
    <property type="molecule type" value="mRNA"/>
</dbReference>
<dbReference type="RefSeq" id="NP_680180.1">
    <molecule id="Q9C595-1"/>
    <property type="nucleotide sequence ID" value="NM_147875.5"/>
</dbReference>
<dbReference type="SMR" id="Q9C595"/>
<dbReference type="FunCoup" id="Q9C595">
    <property type="interactions" value="1279"/>
</dbReference>
<dbReference type="IntAct" id="Q9C595">
    <property type="interactions" value="26"/>
</dbReference>
<dbReference type="STRING" id="3702.Q9C595"/>
<dbReference type="PaxDb" id="3702-AT5G21920.1"/>
<dbReference type="EnsemblPlants" id="AT5G21920.1">
    <molecule id="Q9C595-1"/>
    <property type="protein sequence ID" value="AT5G21920.1"/>
    <property type="gene ID" value="AT5G21920"/>
</dbReference>
<dbReference type="GeneID" id="832252"/>
<dbReference type="Gramene" id="AT5G21920.1">
    <molecule id="Q9C595-1"/>
    <property type="protein sequence ID" value="AT5G21920.1"/>
    <property type="gene ID" value="AT5G21920"/>
</dbReference>
<dbReference type="KEGG" id="ath:AT5G21920"/>
<dbReference type="Araport" id="AT5G21920"/>
<dbReference type="TAIR" id="AT5G21920">
    <property type="gene designation" value="YLMG2"/>
</dbReference>
<dbReference type="eggNOG" id="ENOG502S4TK">
    <property type="taxonomic scope" value="Eukaryota"/>
</dbReference>
<dbReference type="InParanoid" id="Q9C595"/>
<dbReference type="OMA" id="CWGNAQM"/>
<dbReference type="PhylomeDB" id="Q9C595"/>
<dbReference type="PRO" id="PR:Q9C595"/>
<dbReference type="Proteomes" id="UP000006548">
    <property type="component" value="Chromosome 5"/>
</dbReference>
<dbReference type="ExpressionAtlas" id="Q9C595">
    <property type="expression patterns" value="baseline and differential"/>
</dbReference>
<dbReference type="GO" id="GO:0009535">
    <property type="term" value="C:chloroplast thylakoid membrane"/>
    <property type="evidence" value="ECO:0007669"/>
    <property type="project" value="UniProtKB-SubCell"/>
</dbReference>
<dbReference type="InterPro" id="IPR003425">
    <property type="entry name" value="CCB3/YggT"/>
</dbReference>
<dbReference type="PANTHER" id="PTHR33219:SF14">
    <property type="entry name" value="PROTEIN COFACTOR ASSEMBLY OF COMPLEX C SUBUNIT B CCB3, CHLOROPLASTIC-RELATED"/>
    <property type="match status" value="1"/>
</dbReference>
<dbReference type="PANTHER" id="PTHR33219">
    <property type="entry name" value="YLMG HOMOLOG PROTEIN 2, CHLOROPLASTIC"/>
    <property type="match status" value="1"/>
</dbReference>
<dbReference type="Pfam" id="PF02325">
    <property type="entry name" value="YGGT"/>
    <property type="match status" value="1"/>
</dbReference>
<protein>
    <recommendedName>
        <fullName evidence="7">YlmG homolog protein 2, chloroplastic</fullName>
        <shortName evidence="6">AtYLMG2</shortName>
    </recommendedName>
    <alternativeName>
        <fullName evidence="7">YGGT family protein YLMG2</fullName>
    </alternativeName>
</protein>
<reference key="1">
    <citation type="journal article" date="2000" name="Nature">
        <title>Sequence and analysis of chromosome 5 of the plant Arabidopsis thaliana.</title>
        <authorList>
            <person name="Tabata S."/>
            <person name="Kaneko T."/>
            <person name="Nakamura Y."/>
            <person name="Kotani H."/>
            <person name="Kato T."/>
            <person name="Asamizu E."/>
            <person name="Miyajima N."/>
            <person name="Sasamoto S."/>
            <person name="Kimura T."/>
            <person name="Hosouchi T."/>
            <person name="Kawashima K."/>
            <person name="Kohara M."/>
            <person name="Matsumoto M."/>
            <person name="Matsuno A."/>
            <person name="Muraki A."/>
            <person name="Nakayama S."/>
            <person name="Nakazaki N."/>
            <person name="Naruo K."/>
            <person name="Okumura S."/>
            <person name="Shinpo S."/>
            <person name="Takeuchi C."/>
            <person name="Wada T."/>
            <person name="Watanabe A."/>
            <person name="Yamada M."/>
            <person name="Yasuda M."/>
            <person name="Sato S."/>
            <person name="de la Bastide M."/>
            <person name="Huang E."/>
            <person name="Spiegel L."/>
            <person name="Gnoj L."/>
            <person name="O'Shaughnessy A."/>
            <person name="Preston R."/>
            <person name="Habermann K."/>
            <person name="Murray J."/>
            <person name="Johnson D."/>
            <person name="Rohlfing T."/>
            <person name="Nelson J."/>
            <person name="Stoneking T."/>
            <person name="Pepin K."/>
            <person name="Spieth J."/>
            <person name="Sekhon M."/>
            <person name="Armstrong J."/>
            <person name="Becker M."/>
            <person name="Belter E."/>
            <person name="Cordum H."/>
            <person name="Cordes M."/>
            <person name="Courtney L."/>
            <person name="Courtney W."/>
            <person name="Dante M."/>
            <person name="Du H."/>
            <person name="Edwards J."/>
            <person name="Fryman J."/>
            <person name="Haakensen B."/>
            <person name="Lamar E."/>
            <person name="Latreille P."/>
            <person name="Leonard S."/>
            <person name="Meyer R."/>
            <person name="Mulvaney E."/>
            <person name="Ozersky P."/>
            <person name="Riley A."/>
            <person name="Strowmatt C."/>
            <person name="Wagner-McPherson C."/>
            <person name="Wollam A."/>
            <person name="Yoakum M."/>
            <person name="Bell M."/>
            <person name="Dedhia N."/>
            <person name="Parnell L."/>
            <person name="Shah R."/>
            <person name="Rodriguez M."/>
            <person name="Hoon See L."/>
            <person name="Vil D."/>
            <person name="Baker J."/>
            <person name="Kirchoff K."/>
            <person name="Toth K."/>
            <person name="King L."/>
            <person name="Bahret A."/>
            <person name="Miller B."/>
            <person name="Marra M.A."/>
            <person name="Martienssen R."/>
            <person name="McCombie W.R."/>
            <person name="Wilson R.K."/>
            <person name="Murphy G."/>
            <person name="Bancroft I."/>
            <person name="Volckaert G."/>
            <person name="Wambutt R."/>
            <person name="Duesterhoeft A."/>
            <person name="Stiekema W."/>
            <person name="Pohl T."/>
            <person name="Entian K.-D."/>
            <person name="Terryn N."/>
            <person name="Hartley N."/>
            <person name="Bent E."/>
            <person name="Johnson S."/>
            <person name="Langham S.-A."/>
            <person name="McCullagh B."/>
            <person name="Robben J."/>
            <person name="Grymonprez B."/>
            <person name="Zimmermann W."/>
            <person name="Ramsperger U."/>
            <person name="Wedler H."/>
            <person name="Balke K."/>
            <person name="Wedler E."/>
            <person name="Peters S."/>
            <person name="van Staveren M."/>
            <person name="Dirkse W."/>
            <person name="Mooijman P."/>
            <person name="Klein Lankhorst R."/>
            <person name="Weitzenegger T."/>
            <person name="Bothe G."/>
            <person name="Rose M."/>
            <person name="Hauf J."/>
            <person name="Berneiser S."/>
            <person name="Hempel S."/>
            <person name="Feldpausch M."/>
            <person name="Lamberth S."/>
            <person name="Villarroel R."/>
            <person name="Gielen J."/>
            <person name="Ardiles W."/>
            <person name="Bents O."/>
            <person name="Lemcke K."/>
            <person name="Kolesov G."/>
            <person name="Mayer K.F.X."/>
            <person name="Rudd S."/>
            <person name="Schoof H."/>
            <person name="Schueller C."/>
            <person name="Zaccaria P."/>
            <person name="Mewes H.-W."/>
            <person name="Bevan M."/>
            <person name="Fransz P.F."/>
        </authorList>
    </citation>
    <scope>NUCLEOTIDE SEQUENCE [LARGE SCALE GENOMIC DNA]</scope>
    <source>
        <strain>cv. Columbia</strain>
    </source>
</reference>
<reference key="2">
    <citation type="journal article" date="2017" name="Plant J.">
        <title>Araport11: a complete reannotation of the Arabidopsis thaliana reference genome.</title>
        <authorList>
            <person name="Cheng C.Y."/>
            <person name="Krishnakumar V."/>
            <person name="Chan A.P."/>
            <person name="Thibaud-Nissen F."/>
            <person name="Schobel S."/>
            <person name="Town C.D."/>
        </authorList>
    </citation>
    <scope>GENOME REANNOTATION</scope>
    <source>
        <strain>cv. Columbia</strain>
    </source>
</reference>
<reference key="3">
    <citation type="journal article" date="2002" name="Science">
        <title>Functional annotation of a full-length Arabidopsis cDNA collection.</title>
        <authorList>
            <person name="Seki M."/>
            <person name="Narusaka M."/>
            <person name="Kamiya A."/>
            <person name="Ishida J."/>
            <person name="Satou M."/>
            <person name="Sakurai T."/>
            <person name="Nakajima M."/>
            <person name="Enju A."/>
            <person name="Akiyama K."/>
            <person name="Oono Y."/>
            <person name="Muramatsu M."/>
            <person name="Hayashizaki Y."/>
            <person name="Kawai J."/>
            <person name="Carninci P."/>
            <person name="Itoh M."/>
            <person name="Ishii Y."/>
            <person name="Arakawa T."/>
            <person name="Shibata K."/>
            <person name="Shinagawa A."/>
            <person name="Shinozaki K."/>
        </authorList>
    </citation>
    <scope>NUCLEOTIDE SEQUENCE [LARGE SCALE MRNA]</scope>
    <source>
        <strain>cv. Columbia</strain>
    </source>
</reference>
<reference key="4">
    <citation type="journal article" date="2003" name="Science">
        <title>Empirical analysis of transcriptional activity in the Arabidopsis genome.</title>
        <authorList>
            <person name="Yamada K."/>
            <person name="Lim J."/>
            <person name="Dale J.M."/>
            <person name="Chen H."/>
            <person name="Shinn P."/>
            <person name="Palm C.J."/>
            <person name="Southwick A.M."/>
            <person name="Wu H.C."/>
            <person name="Kim C.J."/>
            <person name="Nguyen M."/>
            <person name="Pham P.K."/>
            <person name="Cheuk R.F."/>
            <person name="Karlin-Newmann G."/>
            <person name="Liu S.X."/>
            <person name="Lam B."/>
            <person name="Sakano H."/>
            <person name="Wu T."/>
            <person name="Yu G."/>
            <person name="Miranda M."/>
            <person name="Quach H.L."/>
            <person name="Tripp M."/>
            <person name="Chang C.H."/>
            <person name="Lee J.M."/>
            <person name="Toriumi M.J."/>
            <person name="Chan M.M."/>
            <person name="Tang C.C."/>
            <person name="Onodera C.S."/>
            <person name="Deng J.M."/>
            <person name="Akiyama K."/>
            <person name="Ansari Y."/>
            <person name="Arakawa T."/>
            <person name="Banh J."/>
            <person name="Banno F."/>
            <person name="Bowser L."/>
            <person name="Brooks S.Y."/>
            <person name="Carninci P."/>
            <person name="Chao Q."/>
            <person name="Choy N."/>
            <person name="Enju A."/>
            <person name="Goldsmith A.D."/>
            <person name="Gurjal M."/>
            <person name="Hansen N.F."/>
            <person name="Hayashizaki Y."/>
            <person name="Johnson-Hopson C."/>
            <person name="Hsuan V.W."/>
            <person name="Iida K."/>
            <person name="Karnes M."/>
            <person name="Khan S."/>
            <person name="Koesema E."/>
            <person name="Ishida J."/>
            <person name="Jiang P.X."/>
            <person name="Jones T."/>
            <person name="Kawai J."/>
            <person name="Kamiya A."/>
            <person name="Meyers C."/>
            <person name="Nakajima M."/>
            <person name="Narusaka M."/>
            <person name="Seki M."/>
            <person name="Sakurai T."/>
            <person name="Satou M."/>
            <person name="Tamse R."/>
            <person name="Vaysberg M."/>
            <person name="Wallender E.K."/>
            <person name="Wong C."/>
            <person name="Yamamura Y."/>
            <person name="Yuan S."/>
            <person name="Shinozaki K."/>
            <person name="Davis R.W."/>
            <person name="Theologis A."/>
            <person name="Ecker J.R."/>
        </authorList>
    </citation>
    <scope>NUCLEOTIDE SEQUENCE [LARGE SCALE MRNA]</scope>
    <source>
        <strain>cv. Columbia</strain>
    </source>
</reference>
<reference key="5">
    <citation type="journal article" date="2008" name="J. Biol. Chem.">
        <title>A novel pathway of cytochrome c biogenesis is involved in the assembly of the cytochrome b6f complex in arabidopsis chloroplasts.</title>
        <authorList>
            <person name="Lezhneva L."/>
            <person name="Kuras R."/>
            <person name="Ephritikhine G."/>
            <person name="de Vitry C."/>
        </authorList>
    </citation>
    <scope>FUNCTION</scope>
    <scope>DISRUPTION PHENOTYPE</scope>
</reference>
<reference key="6">
    <citation type="journal article" date="2010" name="BMC Plant Biol.">
        <title>The YlmG protein has a conserved function related to the distribution of nucleoids in chloroplasts and cyanobacteria.</title>
        <authorList>
            <person name="Kabeya Y."/>
            <person name="Nakanishi H."/>
            <person name="Suzuki K."/>
            <person name="Ichikawa T."/>
            <person name="Kondou Y."/>
            <person name="Matsui M."/>
            <person name="Miyagishima S.Y."/>
        </authorList>
    </citation>
    <scope>GENE FAMILY</scope>
</reference>
<sequence>MEASANEPAMKSLKSNPSGPIPNFFVSLSSAFTQTPLVRSNKPNLLLLPPVADSVKLIQDFHQSLISATEKFKGFLHSLASKNPLFQEAVRLSSEFHILCDEIRLRNTTRVRFAMSNHGFAAVLPGDSVAGLVVANGLINFLNIYNTILVVRLVLTWFPSAPPAIVNPLSTLCDPYLNIFRGFIPPLGGLDLSPILAFLVLNAFTSSAMALPCELPSADGAVSPASSETKWVRRRRLSSHKDHRPSSASMT</sequence>
<comment type="function">
    <text evidence="4">Not required for the biogenesis and accumulation of native cytochrome b6 in the thylakoid membrane. Not functionally involved in the pathway for covalent binding of the c-type heme to cytochrome b6.</text>
</comment>
<comment type="subcellular location">
    <subcellularLocation>
        <location evidence="1">Plastid</location>
        <location evidence="1">Chloroplast thylakoid membrane</location>
        <topology evidence="2">Multi-pass membrane protein</topology>
    </subcellularLocation>
</comment>
<comment type="alternative products">
    <event type="alternative splicing"/>
    <isoform>
        <id>Q9C595-1</id>
        <name>1</name>
        <sequence type="displayed"/>
    </isoform>
    <text evidence="7">A number of isoforms are produced. According to EST sequences.</text>
</comment>
<comment type="disruption phenotype">
    <text evidence="4">No visible phenotype under normal growth conditions.</text>
</comment>
<comment type="similarity">
    <text evidence="7">Belongs to the YggT family.</text>
</comment>
<evidence type="ECO:0000250" key="1">
    <source>
        <dbReference type="UniProtKB" id="Q9SRS3"/>
    </source>
</evidence>
<evidence type="ECO:0000255" key="2"/>
<evidence type="ECO:0000256" key="3">
    <source>
        <dbReference type="SAM" id="MobiDB-lite"/>
    </source>
</evidence>
<evidence type="ECO:0000269" key="4">
    <source>
    </source>
</evidence>
<evidence type="ECO:0000303" key="5">
    <source>
    </source>
</evidence>
<evidence type="ECO:0000303" key="6">
    <source>
    </source>
</evidence>
<evidence type="ECO:0000305" key="7"/>
<evidence type="ECO:0000312" key="8">
    <source>
        <dbReference type="Araport" id="AT5G21920"/>
    </source>
</evidence>
<evidence type="ECO:0000312" key="9">
    <source>
        <dbReference type="Proteomes" id="UP000006548"/>
    </source>
</evidence>
<gene>
    <name evidence="6" type="primary">YLMG2</name>
    <name evidence="5" type="synonym">YGGT-A</name>
    <name evidence="8" type="ordered locus">At5g21920</name>
</gene>
<organism evidence="9">
    <name type="scientific">Arabidopsis thaliana</name>
    <name type="common">Mouse-ear cress</name>
    <dbReference type="NCBI Taxonomy" id="3702"/>
    <lineage>
        <taxon>Eukaryota</taxon>
        <taxon>Viridiplantae</taxon>
        <taxon>Streptophyta</taxon>
        <taxon>Embryophyta</taxon>
        <taxon>Tracheophyta</taxon>
        <taxon>Spermatophyta</taxon>
        <taxon>Magnoliopsida</taxon>
        <taxon>eudicotyledons</taxon>
        <taxon>Gunneridae</taxon>
        <taxon>Pentapetalae</taxon>
        <taxon>rosids</taxon>
        <taxon>malvids</taxon>
        <taxon>Brassicales</taxon>
        <taxon>Brassicaceae</taxon>
        <taxon>Camelineae</taxon>
        <taxon>Arabidopsis</taxon>
    </lineage>
</organism>
<name>YLMG2_ARATH</name>